<name>CUTC_BACTN</name>
<feature type="chain" id="PRO_0000215061" description="PF03932 family protein CutC">
    <location>
        <begin position="1"/>
        <end position="249"/>
    </location>
</feature>
<evidence type="ECO:0000255" key="1">
    <source>
        <dbReference type="HAMAP-Rule" id="MF_00795"/>
    </source>
</evidence>
<gene>
    <name evidence="1" type="primary">cutC</name>
    <name type="ordered locus">BT_4416</name>
</gene>
<dbReference type="EMBL" id="AE015928">
    <property type="protein sequence ID" value="AAO79521.1"/>
    <property type="molecule type" value="Genomic_DNA"/>
</dbReference>
<dbReference type="RefSeq" id="NP_813327.1">
    <property type="nucleotide sequence ID" value="NC_004663.1"/>
</dbReference>
<dbReference type="RefSeq" id="WP_011109255.1">
    <property type="nucleotide sequence ID" value="NC_004663.1"/>
</dbReference>
<dbReference type="SMR" id="Q89ZG1"/>
<dbReference type="FunCoup" id="Q89ZG1">
    <property type="interactions" value="138"/>
</dbReference>
<dbReference type="STRING" id="226186.BT_4416"/>
<dbReference type="PaxDb" id="226186-BT_4416"/>
<dbReference type="EnsemblBacteria" id="AAO79521">
    <property type="protein sequence ID" value="AAO79521"/>
    <property type="gene ID" value="BT_4416"/>
</dbReference>
<dbReference type="GeneID" id="60925592"/>
<dbReference type="KEGG" id="bth:BT_4416"/>
<dbReference type="PATRIC" id="fig|226186.12.peg.4496"/>
<dbReference type="eggNOG" id="COG3142">
    <property type="taxonomic scope" value="Bacteria"/>
</dbReference>
<dbReference type="HOGENOM" id="CLU_050555_3_1_10"/>
<dbReference type="InParanoid" id="Q89ZG1"/>
<dbReference type="OrthoDB" id="9815677at2"/>
<dbReference type="Proteomes" id="UP000001414">
    <property type="component" value="Chromosome"/>
</dbReference>
<dbReference type="GO" id="GO:0005737">
    <property type="term" value="C:cytoplasm"/>
    <property type="evidence" value="ECO:0007669"/>
    <property type="project" value="UniProtKB-SubCell"/>
</dbReference>
<dbReference type="GO" id="GO:0005507">
    <property type="term" value="F:copper ion binding"/>
    <property type="evidence" value="ECO:0000318"/>
    <property type="project" value="GO_Central"/>
</dbReference>
<dbReference type="FunFam" id="3.20.20.380:FF:000001">
    <property type="entry name" value="Copper homeostasis protein CutC"/>
    <property type="match status" value="1"/>
</dbReference>
<dbReference type="Gene3D" id="3.20.20.380">
    <property type="entry name" value="Copper homeostasis (CutC) domain"/>
    <property type="match status" value="1"/>
</dbReference>
<dbReference type="HAMAP" id="MF_00795">
    <property type="entry name" value="CutC"/>
    <property type="match status" value="1"/>
</dbReference>
<dbReference type="InterPro" id="IPR005627">
    <property type="entry name" value="CutC-like"/>
</dbReference>
<dbReference type="InterPro" id="IPR036822">
    <property type="entry name" value="CutC-like_dom_sf"/>
</dbReference>
<dbReference type="PANTHER" id="PTHR12598">
    <property type="entry name" value="COPPER HOMEOSTASIS PROTEIN CUTC"/>
    <property type="match status" value="1"/>
</dbReference>
<dbReference type="PANTHER" id="PTHR12598:SF0">
    <property type="entry name" value="COPPER HOMEOSTASIS PROTEIN CUTC HOMOLOG"/>
    <property type="match status" value="1"/>
</dbReference>
<dbReference type="Pfam" id="PF03932">
    <property type="entry name" value="CutC"/>
    <property type="match status" value="1"/>
</dbReference>
<dbReference type="SUPFAM" id="SSF110395">
    <property type="entry name" value="CutC-like"/>
    <property type="match status" value="1"/>
</dbReference>
<accession>Q89ZG1</accession>
<keyword id="KW-0963">Cytoplasm</keyword>
<keyword id="KW-1185">Reference proteome</keyword>
<organism>
    <name type="scientific">Bacteroides thetaiotaomicron (strain ATCC 29148 / DSM 2079 / JCM 5827 / CCUG 10774 / NCTC 10582 / VPI-5482 / E50)</name>
    <dbReference type="NCBI Taxonomy" id="226186"/>
    <lineage>
        <taxon>Bacteria</taxon>
        <taxon>Pseudomonadati</taxon>
        <taxon>Bacteroidota</taxon>
        <taxon>Bacteroidia</taxon>
        <taxon>Bacteroidales</taxon>
        <taxon>Bacteroidaceae</taxon>
        <taxon>Bacteroides</taxon>
    </lineage>
</organism>
<proteinExistence type="inferred from homology"/>
<protein>
    <recommendedName>
        <fullName evidence="1">PF03932 family protein CutC</fullName>
    </recommendedName>
</protein>
<reference key="1">
    <citation type="journal article" date="2003" name="Science">
        <title>A genomic view of the human-Bacteroides thetaiotaomicron symbiosis.</title>
        <authorList>
            <person name="Xu J."/>
            <person name="Bjursell M.K."/>
            <person name="Himrod J."/>
            <person name="Deng S."/>
            <person name="Carmichael L.K."/>
            <person name="Chiang H.C."/>
            <person name="Hooper L.V."/>
            <person name="Gordon J.I."/>
        </authorList>
    </citation>
    <scope>NUCLEOTIDE SEQUENCE [LARGE SCALE GENOMIC DNA]</scope>
    <source>
        <strain>ATCC 29148 / DSM 2079 / JCM 5827 / CCUG 10774 / NCTC 10582 / VPI-5482 / E50</strain>
    </source>
</reference>
<comment type="subcellular location">
    <subcellularLocation>
        <location evidence="1">Cytoplasm</location>
    </subcellularLocation>
</comment>
<comment type="similarity">
    <text evidence="1">Belongs to the CutC family.</text>
</comment>
<comment type="caution">
    <text evidence="1">Once thought to be involved in copper homeostasis, experiments in E.coli have shown this is not the case.</text>
</comment>
<sequence>MKKYQFEVCANSVESCLAAQAGGADRVELCAGIPEGGTTPSYGEISTARDMLTTTRLHVIIRPRGGDFLYSPIEVRTMLKDIEMARQLGADGVVFGCLTANGEIDLPVMQELMKASQGLSVTFHRAFDICRDPEKALEQIIELGCNRILTSGQQATAELGIPLLKALQTQASGRIILLAGCGVNEKNIARIASETGIQEFHFSARESIKSDMKYKNESVSMGGTVHIDEYERNVTTAQRVINTIQAIKS</sequence>